<keyword id="KW-0007">Acetylation</keyword>
<keyword id="KW-0966">Cell projection</keyword>
<keyword id="KW-0175">Coiled coil</keyword>
<keyword id="KW-0963">Cytoplasm</keyword>
<keyword id="KW-0967">Endosome</keyword>
<keyword id="KW-0333">Golgi apparatus</keyword>
<keyword id="KW-0479">Metal-binding</keyword>
<keyword id="KW-0597">Phosphoprotein</keyword>
<keyword id="KW-0653">Protein transport</keyword>
<keyword id="KW-1185">Reference proteome</keyword>
<keyword id="KW-0677">Repeat</keyword>
<keyword id="KW-0808">Transferase</keyword>
<keyword id="KW-0813">Transport</keyword>
<keyword id="KW-0862">Zinc</keyword>
<keyword id="KW-0863">Zinc-finger</keyword>
<protein>
    <recommendedName>
        <fullName>Tripartite motif-containing protein 3</fullName>
        <ecNumber evidence="3">2.3.2.27</ecNumber>
    </recommendedName>
    <alternativeName>
        <fullName>RING finger protein 22</fullName>
    </alternativeName>
    <alternativeName>
        <fullName>RING finger protein HAC1</fullName>
    </alternativeName>
</protein>
<sequence length="744" mass="80774">MAKREDSPGPEVQPMDKQFLVCSICLDRYRCPKVLPCLHTFCERCLQNYIPPQSLTLSCPVCRQTSILPEQGVSALQNNFFISSLMEAMQQAPEGAHDPEDPHPLSAVAGRPLSCPNHEGKTMEFYCEACETAMCGECRAGEHREHGTVLLRDVVEQHKAALQRQLEAVRGRLPQLSAAIALVGGISQQLQERKAEALAQISAAFEDLEQALQQRKQALVSDLESICGAKQKVLQTQLDTLRQGQEHIGSSCSFAEQALRLGSAPEVLLVRKHMRERLAALAAQAFPERPHENAQLELVLEVDGLRRSVLNLGALLTTSATAHETVATGEGLRQALVGQPASLTVTTKDKDGRLVRTGSAELCAEITGPDGVRLAVPVVDHKNGTYELVYTARTEGDLLLSVLLYGQPVRGSPFRVRALRPGDLPPSPDDVKRRVKSPGGPGSHVRQKAVRRPSSMYSTGGKRKDNPIEDELVFRVGSRGREKGEFTNLQGVSAASSGRIVVADSNNQCIQVFSNEGQFKFRFGVRGRSPGQLQRPTGVAVDTNGDIIVADYDNRWVSIFSPEGKFKTKIGAGRLMGPKGVAVDRNGHIIVVDNKSCCVFTFQPNGKLVGRFGGRGATDRHFAGPHFVAVNNKNEIVVTDFHNHSVKVYSADGEFLFKFGSHGEGNGQFNAPTGVAVDSNGNIIVADWGNSRIQVFDSSGSFLSYINTSAEPLYGPQGLALTSDGHVVVADAGNHCFKAYRYLQ</sequence>
<accession>Q9R1R2</accession>
<accession>Q3UMU5</accession>
<proteinExistence type="evidence at protein level"/>
<dbReference type="EC" id="2.3.2.27" evidence="3"/>
<dbReference type="EMBL" id="AB030912">
    <property type="protein sequence ID" value="BAA83343.1"/>
    <property type="molecule type" value="mRNA"/>
</dbReference>
<dbReference type="EMBL" id="AF220019">
    <property type="protein sequence ID" value="AAG53473.1"/>
    <property type="molecule type" value="mRNA"/>
</dbReference>
<dbReference type="EMBL" id="AK019165">
    <property type="protein sequence ID" value="BAB31580.1"/>
    <property type="molecule type" value="mRNA"/>
</dbReference>
<dbReference type="EMBL" id="AK144674">
    <property type="protein sequence ID" value="BAE26003.1"/>
    <property type="molecule type" value="mRNA"/>
</dbReference>
<dbReference type="EMBL" id="BC034263">
    <property type="protein sequence ID" value="AAH34263.1"/>
    <property type="molecule type" value="mRNA"/>
</dbReference>
<dbReference type="CCDS" id="CCDS21655.1"/>
<dbReference type="RefSeq" id="NP_001272799.1">
    <property type="nucleotide sequence ID" value="NM_001285870.1"/>
</dbReference>
<dbReference type="RefSeq" id="NP_001272800.1">
    <property type="nucleotide sequence ID" value="NM_001285871.1"/>
</dbReference>
<dbReference type="RefSeq" id="NP_001272802.1">
    <property type="nucleotide sequence ID" value="NM_001285873.1"/>
</dbReference>
<dbReference type="RefSeq" id="NP_061368.1">
    <property type="nucleotide sequence ID" value="NM_018880.3"/>
</dbReference>
<dbReference type="SMR" id="Q9R1R2"/>
<dbReference type="BioGRID" id="207763">
    <property type="interactions" value="20"/>
</dbReference>
<dbReference type="FunCoup" id="Q9R1R2">
    <property type="interactions" value="868"/>
</dbReference>
<dbReference type="IntAct" id="Q9R1R2">
    <property type="interactions" value="9"/>
</dbReference>
<dbReference type="STRING" id="10090.ENSMUSP00000053384"/>
<dbReference type="iPTMnet" id="Q9R1R2"/>
<dbReference type="PhosphoSitePlus" id="Q9R1R2"/>
<dbReference type="SwissPalm" id="Q9R1R2"/>
<dbReference type="jPOST" id="Q9R1R2"/>
<dbReference type="PaxDb" id="10090-ENSMUSP00000053384"/>
<dbReference type="ProteomicsDB" id="258980"/>
<dbReference type="Pumba" id="Q9R1R2"/>
<dbReference type="Antibodypedia" id="11249">
    <property type="antibodies" value="255 antibodies from 32 providers"/>
</dbReference>
<dbReference type="DNASU" id="55992"/>
<dbReference type="Ensembl" id="ENSMUST00000057525.14">
    <property type="protein sequence ID" value="ENSMUSP00000053384.8"/>
    <property type="gene ID" value="ENSMUSG00000036989.17"/>
</dbReference>
<dbReference type="Ensembl" id="ENSMUST00000106789.8">
    <property type="protein sequence ID" value="ENSMUSP00000102401.2"/>
    <property type="gene ID" value="ENSMUSG00000036989.17"/>
</dbReference>
<dbReference type="Ensembl" id="ENSMUST00000147044.4">
    <property type="protein sequence ID" value="ENSMUSP00000114822.3"/>
    <property type="gene ID" value="ENSMUSG00000036989.17"/>
</dbReference>
<dbReference type="GeneID" id="55992"/>
<dbReference type="KEGG" id="mmu:55992"/>
<dbReference type="UCSC" id="uc009iym.2">
    <property type="organism name" value="mouse"/>
</dbReference>
<dbReference type="AGR" id="MGI:1860040"/>
<dbReference type="CTD" id="10612"/>
<dbReference type="MGI" id="MGI:1860040">
    <property type="gene designation" value="Trim3"/>
</dbReference>
<dbReference type="VEuPathDB" id="HostDB:ENSMUSG00000036989"/>
<dbReference type="eggNOG" id="KOG2177">
    <property type="taxonomic scope" value="Eukaryota"/>
</dbReference>
<dbReference type="GeneTree" id="ENSGT00940000158173"/>
<dbReference type="HOGENOM" id="CLU_008645_5_0_1"/>
<dbReference type="InParanoid" id="Q9R1R2"/>
<dbReference type="OMA" id="RPHENSQ"/>
<dbReference type="OrthoDB" id="342730at2759"/>
<dbReference type="PhylomeDB" id="Q9R1R2"/>
<dbReference type="TreeFam" id="TF331018"/>
<dbReference type="BioGRID-ORCS" id="55992">
    <property type="hits" value="2 hits in 77 CRISPR screens"/>
</dbReference>
<dbReference type="CD-CODE" id="764D0258">
    <property type="entry name" value="Neuronal RNP granule"/>
</dbReference>
<dbReference type="CD-CODE" id="CE726F99">
    <property type="entry name" value="Postsynaptic density"/>
</dbReference>
<dbReference type="ChiTaRS" id="Trim3">
    <property type="organism name" value="mouse"/>
</dbReference>
<dbReference type="PRO" id="PR:Q9R1R2"/>
<dbReference type="Proteomes" id="UP000000589">
    <property type="component" value="Chromosome 7"/>
</dbReference>
<dbReference type="RNAct" id="Q9R1R2">
    <property type="molecule type" value="protein"/>
</dbReference>
<dbReference type="Bgee" id="ENSMUSG00000036989">
    <property type="expression patterns" value="Expressed in cerebellar cortex and 245 other cell types or tissues"/>
</dbReference>
<dbReference type="ExpressionAtlas" id="Q9R1R2">
    <property type="expression patterns" value="baseline and differential"/>
</dbReference>
<dbReference type="GO" id="GO:0005737">
    <property type="term" value="C:cytoplasm"/>
    <property type="evidence" value="ECO:0000314"/>
    <property type="project" value="MGI"/>
</dbReference>
<dbReference type="GO" id="GO:0030425">
    <property type="term" value="C:dendrite"/>
    <property type="evidence" value="ECO:0007669"/>
    <property type="project" value="UniProtKB-SubCell"/>
</dbReference>
<dbReference type="GO" id="GO:0005769">
    <property type="term" value="C:early endosome"/>
    <property type="evidence" value="ECO:0007669"/>
    <property type="project" value="UniProtKB-SubCell"/>
</dbReference>
<dbReference type="GO" id="GO:0005794">
    <property type="term" value="C:Golgi apparatus"/>
    <property type="evidence" value="ECO:0007669"/>
    <property type="project" value="UniProtKB-SubCell"/>
</dbReference>
<dbReference type="GO" id="GO:0042802">
    <property type="term" value="F:identical protein binding"/>
    <property type="evidence" value="ECO:0007669"/>
    <property type="project" value="Ensembl"/>
</dbReference>
<dbReference type="GO" id="GO:0061630">
    <property type="term" value="F:ubiquitin protein ligase activity"/>
    <property type="evidence" value="ECO:0000314"/>
    <property type="project" value="MGI"/>
</dbReference>
<dbReference type="GO" id="GO:0004842">
    <property type="term" value="F:ubiquitin-protein transferase activity"/>
    <property type="evidence" value="ECO:0000314"/>
    <property type="project" value="FlyBase"/>
</dbReference>
<dbReference type="GO" id="GO:0008270">
    <property type="term" value="F:zinc ion binding"/>
    <property type="evidence" value="ECO:0007669"/>
    <property type="project" value="UniProtKB-KW"/>
</dbReference>
<dbReference type="GO" id="GO:0061351">
    <property type="term" value="P:neural precursor cell proliferation"/>
    <property type="evidence" value="ECO:0007669"/>
    <property type="project" value="Ensembl"/>
</dbReference>
<dbReference type="GO" id="GO:0034141">
    <property type="term" value="P:positive regulation of toll-like receptor 3 signaling pathway"/>
    <property type="evidence" value="ECO:0007669"/>
    <property type="project" value="Ensembl"/>
</dbReference>
<dbReference type="GO" id="GO:0070534">
    <property type="term" value="P:protein K63-linked ubiquitination"/>
    <property type="evidence" value="ECO:0007669"/>
    <property type="project" value="Ensembl"/>
</dbReference>
<dbReference type="GO" id="GO:0015031">
    <property type="term" value="P:protein transport"/>
    <property type="evidence" value="ECO:0007669"/>
    <property type="project" value="UniProtKB-KW"/>
</dbReference>
<dbReference type="GO" id="GO:0016567">
    <property type="term" value="P:protein ubiquitination"/>
    <property type="evidence" value="ECO:0000314"/>
    <property type="project" value="FlyBase"/>
</dbReference>
<dbReference type="CDD" id="cd19825">
    <property type="entry name" value="Bbox2_TRIM3_C-VII"/>
    <property type="match status" value="1"/>
</dbReference>
<dbReference type="CDD" id="cd20482">
    <property type="entry name" value="CC_brat-like"/>
    <property type="match status" value="1"/>
</dbReference>
<dbReference type="CDD" id="cd14960">
    <property type="entry name" value="NHL_TRIM2_like"/>
    <property type="match status" value="1"/>
</dbReference>
<dbReference type="CDD" id="cd16768">
    <property type="entry name" value="RING-HC_TRIM3"/>
    <property type="match status" value="1"/>
</dbReference>
<dbReference type="FunFam" id="2.120.10.30:FF:000007">
    <property type="entry name" value="Putative tripartite motif-containing protein 2"/>
    <property type="match status" value="1"/>
</dbReference>
<dbReference type="FunFam" id="2.120.10.30:FF:000004">
    <property type="entry name" value="Tripartite motif containing 2"/>
    <property type="match status" value="1"/>
</dbReference>
<dbReference type="FunFam" id="3.30.40.10:FF:000032">
    <property type="entry name" value="Tripartite motif containing 2"/>
    <property type="match status" value="1"/>
</dbReference>
<dbReference type="FunFam" id="3.30.160.60:FF:000154">
    <property type="entry name" value="Tripartite motif-containing protein 2"/>
    <property type="match status" value="1"/>
</dbReference>
<dbReference type="FunFam" id="2.60.40.10:FF:000412">
    <property type="entry name" value="tripartite motif-containing protein 3"/>
    <property type="match status" value="1"/>
</dbReference>
<dbReference type="Gene3D" id="3.30.160.60">
    <property type="entry name" value="Classic Zinc Finger"/>
    <property type="match status" value="1"/>
</dbReference>
<dbReference type="Gene3D" id="2.60.40.10">
    <property type="entry name" value="Immunoglobulins"/>
    <property type="match status" value="1"/>
</dbReference>
<dbReference type="Gene3D" id="2.120.10.30">
    <property type="entry name" value="TolB, C-terminal domain"/>
    <property type="match status" value="2"/>
</dbReference>
<dbReference type="Gene3D" id="3.30.40.10">
    <property type="entry name" value="Zinc/RING finger domain, C3HC4 (zinc finger)"/>
    <property type="match status" value="1"/>
</dbReference>
<dbReference type="InterPro" id="IPR011042">
    <property type="entry name" value="6-blade_b-propeller_TolB-like"/>
</dbReference>
<dbReference type="InterPro" id="IPR003649">
    <property type="entry name" value="Bbox_C"/>
</dbReference>
<dbReference type="InterPro" id="IPR017868">
    <property type="entry name" value="Filamin/ABP280_repeat-like"/>
</dbReference>
<dbReference type="InterPro" id="IPR001298">
    <property type="entry name" value="Filamin/ABP280_rpt"/>
</dbReference>
<dbReference type="InterPro" id="IPR013783">
    <property type="entry name" value="Ig-like_fold"/>
</dbReference>
<dbReference type="InterPro" id="IPR014756">
    <property type="entry name" value="Ig_E-set"/>
</dbReference>
<dbReference type="InterPro" id="IPR001258">
    <property type="entry name" value="NHL_repeat"/>
</dbReference>
<dbReference type="InterPro" id="IPR050952">
    <property type="entry name" value="TRIM-NHL_E3_ligases"/>
</dbReference>
<dbReference type="InterPro" id="IPR000315">
    <property type="entry name" value="Znf_B-box"/>
</dbReference>
<dbReference type="InterPro" id="IPR018957">
    <property type="entry name" value="Znf_C3HC4_RING-type"/>
</dbReference>
<dbReference type="InterPro" id="IPR001841">
    <property type="entry name" value="Znf_RING"/>
</dbReference>
<dbReference type="InterPro" id="IPR013083">
    <property type="entry name" value="Znf_RING/FYVE/PHD"/>
</dbReference>
<dbReference type="InterPro" id="IPR017907">
    <property type="entry name" value="Znf_RING_CS"/>
</dbReference>
<dbReference type="PANTHER" id="PTHR24104">
    <property type="entry name" value="E3 UBIQUITIN-PROTEIN LIGASE NHLRC1-RELATED"/>
    <property type="match status" value="1"/>
</dbReference>
<dbReference type="PANTHER" id="PTHR24104:SF21">
    <property type="entry name" value="TRIPARTITE MOTIF-CONTAINING PROTEIN 3"/>
    <property type="match status" value="1"/>
</dbReference>
<dbReference type="Pfam" id="PF00630">
    <property type="entry name" value="Filamin"/>
    <property type="match status" value="1"/>
</dbReference>
<dbReference type="Pfam" id="PF01436">
    <property type="entry name" value="NHL"/>
    <property type="match status" value="6"/>
</dbReference>
<dbReference type="Pfam" id="PF00643">
    <property type="entry name" value="zf-B_box"/>
    <property type="match status" value="1"/>
</dbReference>
<dbReference type="Pfam" id="PF00097">
    <property type="entry name" value="zf-C3HC4"/>
    <property type="match status" value="1"/>
</dbReference>
<dbReference type="SMART" id="SM00502">
    <property type="entry name" value="BBC"/>
    <property type="match status" value="1"/>
</dbReference>
<dbReference type="SMART" id="SM00336">
    <property type="entry name" value="BBOX"/>
    <property type="match status" value="1"/>
</dbReference>
<dbReference type="SMART" id="SM00557">
    <property type="entry name" value="IG_FLMN"/>
    <property type="match status" value="1"/>
</dbReference>
<dbReference type="SMART" id="SM00184">
    <property type="entry name" value="RING"/>
    <property type="match status" value="1"/>
</dbReference>
<dbReference type="SUPFAM" id="SSF57845">
    <property type="entry name" value="B-box zinc-binding domain"/>
    <property type="match status" value="1"/>
</dbReference>
<dbReference type="SUPFAM" id="SSF81296">
    <property type="entry name" value="E set domains"/>
    <property type="match status" value="1"/>
</dbReference>
<dbReference type="SUPFAM" id="SSF101898">
    <property type="entry name" value="NHL repeat"/>
    <property type="match status" value="1"/>
</dbReference>
<dbReference type="SUPFAM" id="SSF57850">
    <property type="entry name" value="RING/U-box"/>
    <property type="match status" value="1"/>
</dbReference>
<dbReference type="PROSITE" id="PS50194">
    <property type="entry name" value="FILAMIN_REPEAT"/>
    <property type="match status" value="1"/>
</dbReference>
<dbReference type="PROSITE" id="PS51125">
    <property type="entry name" value="NHL"/>
    <property type="match status" value="6"/>
</dbReference>
<dbReference type="PROSITE" id="PS50119">
    <property type="entry name" value="ZF_BBOX"/>
    <property type="match status" value="1"/>
</dbReference>
<dbReference type="PROSITE" id="PS00518">
    <property type="entry name" value="ZF_RING_1"/>
    <property type="match status" value="1"/>
</dbReference>
<dbReference type="PROSITE" id="PS50089">
    <property type="entry name" value="ZF_RING_2"/>
    <property type="match status" value="1"/>
</dbReference>
<feature type="initiator methionine" description="Removed" evidence="3">
    <location>
        <position position="1"/>
    </location>
</feature>
<feature type="chain" id="PRO_0000056198" description="Tripartite motif-containing protein 3">
    <location>
        <begin position="2"/>
        <end position="744"/>
    </location>
</feature>
<feature type="repeat" description="Filamin">
    <location>
        <begin position="317"/>
        <end position="418"/>
    </location>
</feature>
<feature type="repeat" description="NHL 1">
    <location>
        <begin position="473"/>
        <end position="516"/>
    </location>
</feature>
<feature type="repeat" description="NHL 2">
    <location>
        <begin position="520"/>
        <end position="563"/>
    </location>
</feature>
<feature type="repeat" description="NHL 3">
    <location>
        <begin position="564"/>
        <end position="605"/>
    </location>
</feature>
<feature type="repeat" description="NHL 4">
    <location>
        <begin position="609"/>
        <end position="652"/>
    </location>
</feature>
<feature type="repeat" description="NHL 5">
    <location>
        <begin position="656"/>
        <end position="699"/>
    </location>
</feature>
<feature type="repeat" description="NHL 6">
    <location>
        <begin position="700"/>
        <end position="743"/>
    </location>
</feature>
<feature type="zinc finger region" description="RING-type" evidence="6">
    <location>
        <begin position="22"/>
        <end position="63"/>
    </location>
</feature>
<feature type="zinc finger region" description="B box-type" evidence="5">
    <location>
        <begin position="110"/>
        <end position="151"/>
    </location>
</feature>
<feature type="region of interest" description="Interaction with KIF21B" evidence="8">
    <location>
        <begin position="2"/>
        <end position="290"/>
    </location>
</feature>
<feature type="region of interest" description="Disordered" evidence="7">
    <location>
        <begin position="419"/>
        <end position="464"/>
    </location>
</feature>
<feature type="coiled-coil region" evidence="4">
    <location>
        <begin position="153"/>
        <end position="224"/>
    </location>
</feature>
<feature type="binding site" evidence="5">
    <location>
        <position position="115"/>
    </location>
    <ligand>
        <name>Zn(2+)</name>
        <dbReference type="ChEBI" id="CHEBI:29105"/>
    </ligand>
</feature>
<feature type="binding site" evidence="5">
    <location>
        <position position="118"/>
    </location>
    <ligand>
        <name>Zn(2+)</name>
        <dbReference type="ChEBI" id="CHEBI:29105"/>
    </ligand>
</feature>
<feature type="binding site" evidence="5">
    <location>
        <position position="138"/>
    </location>
    <ligand>
        <name>Zn(2+)</name>
        <dbReference type="ChEBI" id="CHEBI:29105"/>
    </ligand>
</feature>
<feature type="binding site" evidence="5">
    <location>
        <position position="143"/>
    </location>
    <ligand>
        <name>Zn(2+)</name>
        <dbReference type="ChEBI" id="CHEBI:29105"/>
    </ligand>
</feature>
<feature type="modified residue" description="N-acetylalanine" evidence="3">
    <location>
        <position position="2"/>
    </location>
</feature>
<feature type="modified residue" description="Phosphoserine" evidence="12 13">
    <location>
        <position position="7"/>
    </location>
</feature>
<feature type="modified residue" description="Phosphoserine" evidence="13">
    <location>
        <position position="427"/>
    </location>
</feature>
<organism>
    <name type="scientific">Mus musculus</name>
    <name type="common">Mouse</name>
    <dbReference type="NCBI Taxonomy" id="10090"/>
    <lineage>
        <taxon>Eukaryota</taxon>
        <taxon>Metazoa</taxon>
        <taxon>Chordata</taxon>
        <taxon>Craniata</taxon>
        <taxon>Vertebrata</taxon>
        <taxon>Euteleostomi</taxon>
        <taxon>Mammalia</taxon>
        <taxon>Eutheria</taxon>
        <taxon>Euarchontoglires</taxon>
        <taxon>Glires</taxon>
        <taxon>Rodentia</taxon>
        <taxon>Myomorpha</taxon>
        <taxon>Muroidea</taxon>
        <taxon>Muridae</taxon>
        <taxon>Murinae</taxon>
        <taxon>Mus</taxon>
        <taxon>Mus</taxon>
    </lineage>
</organism>
<reference key="1">
    <citation type="submission" date="1999-08" db="EMBL/GenBank/DDBJ databases">
        <title>Cloning of a new co-activator with ring finger motif.</title>
        <authorList>
            <person name="Yanai K."/>
            <person name="Shimamoto Y."/>
            <person name="Hirota K."/>
            <person name="Fukamizu A."/>
        </authorList>
    </citation>
    <scope>NUCLEOTIDE SEQUENCE [MRNA]</scope>
    <source>
        <tissue>Liver</tissue>
    </source>
</reference>
<reference key="2">
    <citation type="journal article" date="2001" name="EMBO J.">
        <title>The tripartite motif family identifies cell compartments.</title>
        <authorList>
            <person name="Reymond A."/>
            <person name="Meroni G."/>
            <person name="Fantozzi A."/>
            <person name="Merla G."/>
            <person name="Cairo S."/>
            <person name="Luzi L."/>
            <person name="Riganelli D."/>
            <person name="Zanaria E."/>
            <person name="Messali S."/>
            <person name="Cainarca S."/>
            <person name="Guffanti A."/>
            <person name="Minucci S."/>
            <person name="Pelicci P.G."/>
            <person name="Ballabio A."/>
        </authorList>
    </citation>
    <scope>NUCLEOTIDE SEQUENCE [MRNA]</scope>
</reference>
<reference key="3">
    <citation type="journal article" date="2005" name="Science">
        <title>The transcriptional landscape of the mammalian genome.</title>
        <authorList>
            <person name="Carninci P."/>
            <person name="Kasukawa T."/>
            <person name="Katayama S."/>
            <person name="Gough J."/>
            <person name="Frith M.C."/>
            <person name="Maeda N."/>
            <person name="Oyama R."/>
            <person name="Ravasi T."/>
            <person name="Lenhard B."/>
            <person name="Wells C."/>
            <person name="Kodzius R."/>
            <person name="Shimokawa K."/>
            <person name="Bajic V.B."/>
            <person name="Brenner S.E."/>
            <person name="Batalov S."/>
            <person name="Forrest A.R."/>
            <person name="Zavolan M."/>
            <person name="Davis M.J."/>
            <person name="Wilming L.G."/>
            <person name="Aidinis V."/>
            <person name="Allen J.E."/>
            <person name="Ambesi-Impiombato A."/>
            <person name="Apweiler R."/>
            <person name="Aturaliya R.N."/>
            <person name="Bailey T.L."/>
            <person name="Bansal M."/>
            <person name="Baxter L."/>
            <person name="Beisel K.W."/>
            <person name="Bersano T."/>
            <person name="Bono H."/>
            <person name="Chalk A.M."/>
            <person name="Chiu K.P."/>
            <person name="Choudhary V."/>
            <person name="Christoffels A."/>
            <person name="Clutterbuck D.R."/>
            <person name="Crowe M.L."/>
            <person name="Dalla E."/>
            <person name="Dalrymple B.P."/>
            <person name="de Bono B."/>
            <person name="Della Gatta G."/>
            <person name="di Bernardo D."/>
            <person name="Down T."/>
            <person name="Engstrom P."/>
            <person name="Fagiolini M."/>
            <person name="Faulkner G."/>
            <person name="Fletcher C.F."/>
            <person name="Fukushima T."/>
            <person name="Furuno M."/>
            <person name="Futaki S."/>
            <person name="Gariboldi M."/>
            <person name="Georgii-Hemming P."/>
            <person name="Gingeras T.R."/>
            <person name="Gojobori T."/>
            <person name="Green R.E."/>
            <person name="Gustincich S."/>
            <person name="Harbers M."/>
            <person name="Hayashi Y."/>
            <person name="Hensch T.K."/>
            <person name="Hirokawa N."/>
            <person name="Hill D."/>
            <person name="Huminiecki L."/>
            <person name="Iacono M."/>
            <person name="Ikeo K."/>
            <person name="Iwama A."/>
            <person name="Ishikawa T."/>
            <person name="Jakt M."/>
            <person name="Kanapin A."/>
            <person name="Katoh M."/>
            <person name="Kawasawa Y."/>
            <person name="Kelso J."/>
            <person name="Kitamura H."/>
            <person name="Kitano H."/>
            <person name="Kollias G."/>
            <person name="Krishnan S.P."/>
            <person name="Kruger A."/>
            <person name="Kummerfeld S.K."/>
            <person name="Kurochkin I.V."/>
            <person name="Lareau L.F."/>
            <person name="Lazarevic D."/>
            <person name="Lipovich L."/>
            <person name="Liu J."/>
            <person name="Liuni S."/>
            <person name="McWilliam S."/>
            <person name="Madan Babu M."/>
            <person name="Madera M."/>
            <person name="Marchionni L."/>
            <person name="Matsuda H."/>
            <person name="Matsuzawa S."/>
            <person name="Miki H."/>
            <person name="Mignone F."/>
            <person name="Miyake S."/>
            <person name="Morris K."/>
            <person name="Mottagui-Tabar S."/>
            <person name="Mulder N."/>
            <person name="Nakano N."/>
            <person name="Nakauchi H."/>
            <person name="Ng P."/>
            <person name="Nilsson R."/>
            <person name="Nishiguchi S."/>
            <person name="Nishikawa S."/>
            <person name="Nori F."/>
            <person name="Ohara O."/>
            <person name="Okazaki Y."/>
            <person name="Orlando V."/>
            <person name="Pang K.C."/>
            <person name="Pavan W.J."/>
            <person name="Pavesi G."/>
            <person name="Pesole G."/>
            <person name="Petrovsky N."/>
            <person name="Piazza S."/>
            <person name="Reed J."/>
            <person name="Reid J.F."/>
            <person name="Ring B.Z."/>
            <person name="Ringwald M."/>
            <person name="Rost B."/>
            <person name="Ruan Y."/>
            <person name="Salzberg S.L."/>
            <person name="Sandelin A."/>
            <person name="Schneider C."/>
            <person name="Schoenbach C."/>
            <person name="Sekiguchi K."/>
            <person name="Semple C.A."/>
            <person name="Seno S."/>
            <person name="Sessa L."/>
            <person name="Sheng Y."/>
            <person name="Shibata Y."/>
            <person name="Shimada H."/>
            <person name="Shimada K."/>
            <person name="Silva D."/>
            <person name="Sinclair B."/>
            <person name="Sperling S."/>
            <person name="Stupka E."/>
            <person name="Sugiura K."/>
            <person name="Sultana R."/>
            <person name="Takenaka Y."/>
            <person name="Taki K."/>
            <person name="Tammoja K."/>
            <person name="Tan S.L."/>
            <person name="Tang S."/>
            <person name="Taylor M.S."/>
            <person name="Tegner J."/>
            <person name="Teichmann S.A."/>
            <person name="Ueda H.R."/>
            <person name="van Nimwegen E."/>
            <person name="Verardo R."/>
            <person name="Wei C.L."/>
            <person name="Yagi K."/>
            <person name="Yamanishi H."/>
            <person name="Zabarovsky E."/>
            <person name="Zhu S."/>
            <person name="Zimmer A."/>
            <person name="Hide W."/>
            <person name="Bult C."/>
            <person name="Grimmond S.M."/>
            <person name="Teasdale R.D."/>
            <person name="Liu E.T."/>
            <person name="Brusic V."/>
            <person name="Quackenbush J."/>
            <person name="Wahlestedt C."/>
            <person name="Mattick J.S."/>
            <person name="Hume D.A."/>
            <person name="Kai C."/>
            <person name="Sasaki D."/>
            <person name="Tomaru Y."/>
            <person name="Fukuda S."/>
            <person name="Kanamori-Katayama M."/>
            <person name="Suzuki M."/>
            <person name="Aoki J."/>
            <person name="Arakawa T."/>
            <person name="Iida J."/>
            <person name="Imamura K."/>
            <person name="Itoh M."/>
            <person name="Kato T."/>
            <person name="Kawaji H."/>
            <person name="Kawagashira N."/>
            <person name="Kawashima T."/>
            <person name="Kojima M."/>
            <person name="Kondo S."/>
            <person name="Konno H."/>
            <person name="Nakano K."/>
            <person name="Ninomiya N."/>
            <person name="Nishio T."/>
            <person name="Okada M."/>
            <person name="Plessy C."/>
            <person name="Shibata K."/>
            <person name="Shiraki T."/>
            <person name="Suzuki S."/>
            <person name="Tagami M."/>
            <person name="Waki K."/>
            <person name="Watahiki A."/>
            <person name="Okamura-Oho Y."/>
            <person name="Suzuki H."/>
            <person name="Kawai J."/>
            <person name="Hayashizaki Y."/>
        </authorList>
    </citation>
    <scope>NUCLEOTIDE SEQUENCE [LARGE SCALE MRNA]</scope>
    <source>
        <strain>C57BL/6J</strain>
        <tissue>Embryo</tissue>
        <tissue>Lung</tissue>
    </source>
</reference>
<reference key="4">
    <citation type="journal article" date="2004" name="Genome Res.">
        <title>The status, quality, and expansion of the NIH full-length cDNA project: the Mammalian Gene Collection (MGC).</title>
        <authorList>
            <consortium name="The MGC Project Team"/>
        </authorList>
    </citation>
    <scope>NUCLEOTIDE SEQUENCE [LARGE SCALE MRNA]</scope>
    <source>
        <tissue>Retina</tissue>
    </source>
</reference>
<reference key="5">
    <citation type="journal article" date="2006" name="Mol. Cell. Proteomics">
        <title>Comprehensive identification of phosphorylation sites in postsynaptic density preparations.</title>
        <authorList>
            <person name="Trinidad J.C."/>
            <person name="Specht C.G."/>
            <person name="Thalhammer A."/>
            <person name="Schoepfer R."/>
            <person name="Burlingame A.L."/>
        </authorList>
    </citation>
    <scope>PHOSPHORYLATION [LARGE SCALE ANALYSIS] AT SER-7</scope>
    <scope>IDENTIFICATION BY MASS SPECTROMETRY [LARGE SCALE ANALYSIS]</scope>
    <source>
        <tissue>Brain</tissue>
    </source>
</reference>
<reference key="6">
    <citation type="journal article" date="2010" name="Cell">
        <title>A tissue-specific atlas of mouse protein phosphorylation and expression.</title>
        <authorList>
            <person name="Huttlin E.L."/>
            <person name="Jedrychowski M.P."/>
            <person name="Elias J.E."/>
            <person name="Goswami T."/>
            <person name="Rad R."/>
            <person name="Beausoleil S.A."/>
            <person name="Villen J."/>
            <person name="Haas W."/>
            <person name="Sowa M.E."/>
            <person name="Gygi S.P."/>
        </authorList>
    </citation>
    <scope>PHOSPHORYLATION [LARGE SCALE ANALYSIS] AT SER-7 AND SER-427</scope>
    <scope>IDENTIFICATION BY MASS SPECTROMETRY [LARGE SCALE ANALYSIS]</scope>
    <source>
        <tissue>Brain</tissue>
        <tissue>Brown adipose tissue</tissue>
        <tissue>Heart</tissue>
        <tissue>Kidney</tissue>
        <tissue>Lung</tissue>
        <tissue>Pancreas</tissue>
        <tissue>Spleen</tissue>
        <tissue>Testis</tissue>
    </source>
</reference>
<reference key="7">
    <citation type="journal article" date="2013" name="PLoS ONE">
        <title>TRIM3 regulates the motility of the kinesin motor protein KIF21B.</title>
        <authorList>
            <person name="Labonte D."/>
            <person name="Thies E."/>
            <person name="Pechmann Y."/>
            <person name="Groffen A.J."/>
            <person name="Verhage M."/>
            <person name="Smit A.B."/>
            <person name="van Kesteren R.E."/>
            <person name="Kneussel M."/>
        </authorList>
    </citation>
    <scope>FUNCTION</scope>
    <scope>INTERACTION WITH KIF21B</scope>
    <scope>SUBCELLULAR LOCATION</scope>
    <scope>DISRUPTION PHENOTYPE</scope>
</reference>
<reference key="8">
    <citation type="journal article" date="2015" name="J. Cell Biol.">
        <title>Ubiquitin ligase TRIM3 controls hippocampal plasticity and learning by regulating synaptic gamma-actin levels.</title>
        <authorList>
            <person name="Schreiber J."/>
            <person name="Vegh M.J."/>
            <person name="Dawitz J."/>
            <person name="Kroon T."/>
            <person name="Loos M."/>
            <person name="Labonte D."/>
            <person name="Li K.W."/>
            <person name="Van Nierop P."/>
            <person name="Van Diepen M.T."/>
            <person name="De Zeeuw C.I."/>
            <person name="Kneussel M."/>
            <person name="Meredith R.M."/>
            <person name="Smit A.B."/>
            <person name="Van Kesteren R.E."/>
        </authorList>
    </citation>
    <scope>FUNCTION</scope>
    <scope>DISRUPTION PHENOTYPE</scope>
</reference>
<reference key="9">
    <citation type="journal article" date="2020" name="Proc. Natl. Acad. Sci. U.S.A.">
        <title>Ubiquitination of TLR3 by TRIM3 signals its ESCRT-mediated trafficking to the endolysosomes for innate antiviral response.</title>
        <authorList>
            <person name="Li W.W."/>
            <person name="Nie Y."/>
            <person name="Yang Y."/>
            <person name="Ran Y."/>
            <person name="Luo W.W."/>
            <person name="Xiong M.G."/>
            <person name="Wang S.Y."/>
            <person name="Xu Z.S."/>
            <person name="Wang Y.Y."/>
        </authorList>
    </citation>
    <scope>FUNCTION</scope>
    <scope>DISRUPTION PHENOTYPE</scope>
</reference>
<gene>
    <name type="primary">Trim3</name>
    <name type="synonym">Hac1</name>
    <name type="synonym">Rnf22</name>
</gene>
<evidence type="ECO:0000250" key="1"/>
<evidence type="ECO:0000250" key="2">
    <source>
        <dbReference type="UniProtKB" id="O70277"/>
    </source>
</evidence>
<evidence type="ECO:0000250" key="3">
    <source>
        <dbReference type="UniProtKB" id="O75382"/>
    </source>
</evidence>
<evidence type="ECO:0000255" key="4"/>
<evidence type="ECO:0000255" key="5">
    <source>
        <dbReference type="PROSITE-ProRule" id="PRU00024"/>
    </source>
</evidence>
<evidence type="ECO:0000255" key="6">
    <source>
        <dbReference type="PROSITE-ProRule" id="PRU00175"/>
    </source>
</evidence>
<evidence type="ECO:0000256" key="7">
    <source>
        <dbReference type="SAM" id="MobiDB-lite"/>
    </source>
</evidence>
<evidence type="ECO:0000269" key="8">
    <source>
    </source>
</evidence>
<evidence type="ECO:0000269" key="9">
    <source>
    </source>
</evidence>
<evidence type="ECO:0000269" key="10">
    <source>
    </source>
</evidence>
<evidence type="ECO:0000305" key="11"/>
<evidence type="ECO:0007744" key="12">
    <source>
    </source>
</evidence>
<evidence type="ECO:0007744" key="13">
    <source>
    </source>
</evidence>
<name>TRIM3_MOUSE</name>
<comment type="function">
    <text evidence="2 3 8 9 10">E3 ubiquitin ligase that plays essential roles in neuronal functions such as regulation of neuronal plasticity, learning, and memory (PubMed:24086586, PubMed:26527743). In addition to its neuronal functions, participates in other biological processes such as innate immunity or cell cycle regulation (By similarity). Component of the cytoskeleton-associated recycling or transport complex in neurons, polyubiquitinates gamma-actin, thus regulating neuronal plasticity, learning, and memory (PubMed:26527743). Ubiquitinates postsynaptic scaffold GKAP, a neuronal substrate involved in synaptic remodeling and thereby modulates dendritic spine morphology (By similarity). Positively regulates motility of microtubule-dependent motor protein KIF21B (PubMed:24086586). Induces growth arrest via its RING-dependent E3 ligase activity and ubiquinates CDKN1A. Positively regulates TLR3-mediated signaling by mediating 'Lys-63'-linked polyubiquitination of TLR3 (PubMed:26527743). In turn, promotes the recognition and sorting of polyubiquitinated TLR3 by the ESCRT complexes (By similarity).</text>
</comment>
<comment type="catalytic activity">
    <reaction evidence="3">
        <text>S-ubiquitinyl-[E2 ubiquitin-conjugating enzyme]-L-cysteine + [acceptor protein]-L-lysine = [E2 ubiquitin-conjugating enzyme]-L-cysteine + N(6)-ubiquitinyl-[acceptor protein]-L-lysine.</text>
        <dbReference type="EC" id="2.3.2.27"/>
    </reaction>
</comment>
<comment type="subunit">
    <text evidence="2 3 8">Forms homooligomers. Interacts with TRIM2; this interaction reduces TRIM2 activity (By similarity). Associates with myosin-Vb (MYO5B) and alpha-actinin-4 (ACTN4) (By similarity). Component of the CART complex, at least composed of ACTN4, HGS/HRS, MYO5B and TRIM3. Interacts with ZFYVE28/LST2 (By similarity). Interacts with KIF21B (PubMed:24086586).</text>
</comment>
<comment type="subcellular location">
    <subcellularLocation>
        <location evidence="3">Cytoplasm</location>
    </subcellularLocation>
    <subcellularLocation>
        <location evidence="3">Early endosome</location>
    </subcellularLocation>
    <subcellularLocation>
        <location evidence="8">Golgi apparatus</location>
        <location evidence="8">trans-Golgi network</location>
    </subcellularLocation>
    <subcellularLocation>
        <location evidence="8">Cell projection</location>
        <location evidence="8">Dendrite</location>
    </subcellularLocation>
    <text evidence="3">Mainly located in the Golgi apparatus and transported to the early endosomes upon stimulation with dsRNA.</text>
</comment>
<comment type="domain">
    <text evidence="1">The interaction with MYO5B is dependent upon its NHL repeats, which form a beta-propeller (NHL) domain containing six blades.</text>
</comment>
<comment type="disruption phenotype">
    <text evidence="8 9 10">Trim3-knockout mice are viable, fertile and showed no obvious morphological abnormalities (PubMed:24086586). However, they display increased levels of gamma-actin at hippocampal synapses, resulting in higher spine densities, increased long-term potentiation, and enhanced short-term contextual fear memory consolidation (PubMed:26527743). In addition, they express lower levels of antiviral genes and show lower levels of inflammatory response following poly(I:C) but not lipopolysaccharide (LPS) stimulation (PubMed:32878999).</text>
</comment>
<comment type="similarity">
    <text evidence="11">Belongs to the TRIM/RBCC family.</text>
</comment>